<proteinExistence type="evidence at protein level"/>
<reference key="1">
    <citation type="journal article" date="2001" name="Science">
        <title>Comparative genomics of Listeria species.</title>
        <authorList>
            <person name="Glaser P."/>
            <person name="Frangeul L."/>
            <person name="Buchrieser C."/>
            <person name="Rusniok C."/>
            <person name="Amend A."/>
            <person name="Baquero F."/>
            <person name="Berche P."/>
            <person name="Bloecker H."/>
            <person name="Brandt P."/>
            <person name="Chakraborty T."/>
            <person name="Charbit A."/>
            <person name="Chetouani F."/>
            <person name="Couve E."/>
            <person name="de Daruvar A."/>
            <person name="Dehoux P."/>
            <person name="Domann E."/>
            <person name="Dominguez-Bernal G."/>
            <person name="Duchaud E."/>
            <person name="Durant L."/>
            <person name="Dussurget O."/>
            <person name="Entian K.-D."/>
            <person name="Fsihi H."/>
            <person name="Garcia-del Portillo F."/>
            <person name="Garrido P."/>
            <person name="Gautier L."/>
            <person name="Goebel W."/>
            <person name="Gomez-Lopez N."/>
            <person name="Hain T."/>
            <person name="Hauf J."/>
            <person name="Jackson D."/>
            <person name="Jones L.-M."/>
            <person name="Kaerst U."/>
            <person name="Kreft J."/>
            <person name="Kuhn M."/>
            <person name="Kunst F."/>
            <person name="Kurapkat G."/>
            <person name="Madueno E."/>
            <person name="Maitournam A."/>
            <person name="Mata Vicente J."/>
            <person name="Ng E."/>
            <person name="Nedjari H."/>
            <person name="Nordsiek G."/>
            <person name="Novella S."/>
            <person name="de Pablos B."/>
            <person name="Perez-Diaz J.-C."/>
            <person name="Purcell R."/>
            <person name="Remmel B."/>
            <person name="Rose M."/>
            <person name="Schlueter T."/>
            <person name="Simoes N."/>
            <person name="Tierrez A."/>
            <person name="Vazquez-Boland J.-A."/>
            <person name="Voss H."/>
            <person name="Wehland J."/>
            <person name="Cossart P."/>
        </authorList>
    </citation>
    <scope>NUCLEOTIDE SEQUENCE [LARGE SCALE GENOMIC DNA]</scope>
    <source>
        <strain>ATCC BAA-680 / CLIP 11262</strain>
    </source>
</reference>
<reference evidence="5" key="2">
    <citation type="journal article" date="2014" name="Proc. Natl. Acad. Sci. U.S.A.">
        <title>Loss of quaternary structure is associated with rapid sequence divergence in the OSBS family.</title>
        <authorList>
            <person name="Odokonyero D."/>
            <person name="Sakai A."/>
            <person name="Patskovsky Y."/>
            <person name="Malashkevich V.N."/>
            <person name="Fedorov A.A."/>
            <person name="Bonanno J.B."/>
            <person name="Fedorov E.V."/>
            <person name="Toro R."/>
            <person name="Agarwal R."/>
            <person name="Wang C."/>
            <person name="Ozerova N.D."/>
            <person name="Yew W.S."/>
            <person name="Sauder J.M."/>
            <person name="Swaminathan S."/>
            <person name="Burley S.K."/>
            <person name="Almo S.C."/>
            <person name="Glasner M.E."/>
        </authorList>
    </citation>
    <scope>X-RAY CRYSTALLOGRAPHY (2.90 ANGSTROMS)</scope>
    <scope>FUNCTION</scope>
    <scope>CATALYTIC ACTIVITY</scope>
    <scope>COFACTOR</scope>
    <scope>BIOPHYSICOCHEMICAL PROPERTIES</scope>
    <scope>SUBUNIT</scope>
    <source>
        <strain>ATCC BAA-680 / CLIP 11262</strain>
    </source>
</reference>
<accession>Q927X3</accession>
<protein>
    <recommendedName>
        <fullName evidence="1 3">o-succinylbenzoate synthase</fullName>
        <shortName evidence="1">OSB synthase</shortName>
        <shortName evidence="1 3">OSBS</shortName>
        <ecNumber evidence="1 2">4.2.1.113</ecNumber>
    </recommendedName>
    <alternativeName>
        <fullName evidence="1">4-(2'-carboxyphenyl)-4-oxybutyric acid synthase</fullName>
    </alternativeName>
    <alternativeName>
        <fullName evidence="3">N-succinylamino acid racemase</fullName>
        <shortName evidence="3">NSAR</shortName>
        <ecNumber evidence="2">5.1.1.-</ecNumber>
    </alternativeName>
    <alternativeName>
        <fullName evidence="1">o-succinylbenzoic acid synthase</fullName>
    </alternativeName>
</protein>
<organism>
    <name type="scientific">Listeria innocua serovar 6a (strain ATCC BAA-680 / CLIP 11262)</name>
    <dbReference type="NCBI Taxonomy" id="272626"/>
    <lineage>
        <taxon>Bacteria</taxon>
        <taxon>Bacillati</taxon>
        <taxon>Bacillota</taxon>
        <taxon>Bacilli</taxon>
        <taxon>Bacillales</taxon>
        <taxon>Listeriaceae</taxon>
        <taxon>Listeria</taxon>
    </lineage>
</organism>
<feature type="chain" id="PRO_0000455100" description="o-succinylbenzoate synthase">
    <location>
        <begin position="1"/>
        <end position="374"/>
    </location>
</feature>
<feature type="active site" description="Proton donor" evidence="1">
    <location>
        <position position="164"/>
    </location>
</feature>
<feature type="active site" description="Proton acceptor" evidence="1">
    <location>
        <position position="263"/>
    </location>
</feature>
<feature type="binding site" evidence="1">
    <location>
        <position position="189"/>
    </location>
    <ligand>
        <name>Mg(2+)</name>
        <dbReference type="ChEBI" id="CHEBI:18420"/>
    </ligand>
</feature>
<feature type="binding site" evidence="1">
    <location>
        <position position="214"/>
    </location>
    <ligand>
        <name>Mg(2+)</name>
        <dbReference type="ChEBI" id="CHEBI:18420"/>
    </ligand>
</feature>
<feature type="binding site" evidence="1">
    <location>
        <position position="239"/>
    </location>
    <ligand>
        <name>Mg(2+)</name>
        <dbReference type="ChEBI" id="CHEBI:18420"/>
    </ligand>
</feature>
<feature type="strand" evidence="6">
    <location>
        <begin position="5"/>
        <end position="21"/>
    </location>
</feature>
<feature type="strand" evidence="6">
    <location>
        <begin position="24"/>
        <end position="37"/>
    </location>
</feature>
<feature type="strand" evidence="6">
    <location>
        <begin position="39"/>
        <end position="41"/>
    </location>
</feature>
<feature type="strand" evidence="6">
    <location>
        <begin position="43"/>
        <end position="48"/>
    </location>
</feature>
<feature type="strand" evidence="6">
    <location>
        <begin position="56"/>
        <end position="58"/>
    </location>
</feature>
<feature type="helix" evidence="6">
    <location>
        <begin position="61"/>
        <end position="70"/>
    </location>
</feature>
<feature type="helix" evidence="6">
    <location>
        <begin position="73"/>
        <end position="78"/>
    </location>
</feature>
<feature type="strand" evidence="6">
    <location>
        <begin position="80"/>
        <end position="83"/>
    </location>
</feature>
<feature type="helix" evidence="6">
    <location>
        <begin position="86"/>
        <end position="91"/>
    </location>
</feature>
<feature type="helix" evidence="6">
    <location>
        <begin position="98"/>
        <end position="115"/>
    </location>
</feature>
<feature type="helix" evidence="6">
    <location>
        <begin position="120"/>
        <end position="123"/>
    </location>
</feature>
<feature type="strand" evidence="6">
    <location>
        <begin position="129"/>
        <end position="133"/>
    </location>
</feature>
<feature type="strand" evidence="6">
    <location>
        <begin position="135"/>
        <end position="137"/>
    </location>
</feature>
<feature type="helix" evidence="6">
    <location>
        <begin position="143"/>
        <end position="156"/>
    </location>
</feature>
<feature type="strand" evidence="6">
    <location>
        <begin position="160"/>
        <end position="164"/>
    </location>
</feature>
<feature type="helix" evidence="6">
    <location>
        <begin position="171"/>
        <end position="178"/>
    </location>
</feature>
<feature type="strand" evidence="6">
    <location>
        <begin position="184"/>
        <end position="189"/>
    </location>
</feature>
<feature type="helix" evidence="6">
    <location>
        <begin position="196"/>
        <end position="198"/>
    </location>
</feature>
<feature type="helix" evidence="6">
    <location>
        <begin position="199"/>
        <end position="203"/>
    </location>
</feature>
<feature type="helix" evidence="6">
    <location>
        <begin position="204"/>
        <end position="208"/>
    </location>
</feature>
<feature type="strand" evidence="6">
    <location>
        <begin position="211"/>
        <end position="214"/>
    </location>
</feature>
<feature type="helix" evidence="6">
    <location>
        <begin position="223"/>
        <end position="229"/>
    </location>
</feature>
<feature type="strand" evidence="6">
    <location>
        <begin position="233"/>
        <end position="238"/>
    </location>
</feature>
<feature type="helix" evidence="6">
    <location>
        <begin position="245"/>
        <end position="254"/>
    </location>
</feature>
<feature type="strand" evidence="6">
    <location>
        <begin position="258"/>
        <end position="262"/>
    </location>
</feature>
<feature type="helix" evidence="6">
    <location>
        <begin position="265"/>
        <end position="267"/>
    </location>
</feature>
<feature type="helix" evidence="6">
    <location>
        <begin position="270"/>
        <end position="282"/>
    </location>
</feature>
<feature type="strand" evidence="6">
    <location>
        <begin position="286"/>
        <end position="289"/>
    </location>
</feature>
<feature type="helix" evidence="6">
    <location>
        <begin position="296"/>
        <end position="306"/>
    </location>
</feature>
<feature type="strand" evidence="6">
    <location>
        <begin position="308"/>
        <end position="310"/>
    </location>
</feature>
<feature type="helix" evidence="6">
    <location>
        <begin position="320"/>
        <end position="322"/>
    </location>
</feature>
<feature type="strand" evidence="6">
    <location>
        <begin position="324"/>
        <end position="326"/>
    </location>
</feature>
<feature type="strand" evidence="6">
    <location>
        <begin position="328"/>
        <end position="331"/>
    </location>
</feature>
<feature type="strand" evidence="6">
    <location>
        <begin position="337"/>
        <end position="341"/>
    </location>
</feature>
<feature type="strand" evidence="6">
    <location>
        <begin position="345"/>
        <end position="347"/>
    </location>
</feature>
<feature type="helix" evidence="6">
    <location>
        <begin position="354"/>
        <end position="358"/>
    </location>
</feature>
<feature type="strand" evidence="6">
    <location>
        <begin position="361"/>
        <end position="368"/>
    </location>
</feature>
<name>MENC_LISIN</name>
<keyword id="KW-0002">3D-structure</keyword>
<keyword id="KW-0413">Isomerase</keyword>
<keyword id="KW-0456">Lyase</keyword>
<keyword id="KW-0460">Magnesium</keyword>
<keyword id="KW-0474">Menaquinone biosynthesis</keyword>
<keyword id="KW-0479">Metal-binding</keyword>
<comment type="function">
    <text evidence="2">Converts 2-succinyl-6-hydroxy-2,4-cyclohexadiene-1-carboxylate (SHCHC) to 2-succinylbenzoate (OSB) (PubMed:24872444). Also acts as a N-succinylamino acid racemase (NSAR) that catalyzes the racemization of N-succinyl-L-phenylglycine (PubMed:24872444). L.innocua has the menaquinone synthesis pathway, indicating that the species requires OSBS activity. However, the NSAR/OSBS is not encoded in the menaquinone operon, raising the possibility that both NSAR and OSBS are biological functions (PubMed:24872444).</text>
</comment>
<comment type="catalytic activity">
    <reaction evidence="1 2">
        <text>(1R,6R)-6-hydroxy-2-succinyl-cyclohexa-2,4-diene-1-carboxylate = 2-succinylbenzoate + H2O</text>
        <dbReference type="Rhea" id="RHEA:10196"/>
        <dbReference type="ChEBI" id="CHEBI:15377"/>
        <dbReference type="ChEBI" id="CHEBI:18325"/>
        <dbReference type="ChEBI" id="CHEBI:58689"/>
        <dbReference type="EC" id="4.2.1.113"/>
    </reaction>
</comment>
<comment type="cofactor">
    <cofactor evidence="1 2">
        <name>a divalent metal cation</name>
        <dbReference type="ChEBI" id="CHEBI:60240"/>
    </cofactor>
</comment>
<comment type="biophysicochemical properties">
    <kinetics>
        <KM evidence="2">59 uM for SHCHC</KM>
        <KM evidence="2">640 uM for N-succinyl-L-phenylglycine</KM>
        <text evidence="2">kcat is 170 sec(-1) with SHCHC as substrate. kcat is 1.6 sec(-1) with N-succinyl-L-phenylglycine as substrate.</text>
    </kinetics>
</comment>
<comment type="pathway">
    <text evidence="1">Quinol/quinone metabolism; 1,4-dihydroxy-2-naphthoate biosynthesis; 1,4-dihydroxy-2-naphthoate from chorismate: step 4/7.</text>
</comment>
<comment type="pathway">
    <text evidence="1">Quinol/quinone metabolism; menaquinone biosynthesis.</text>
</comment>
<comment type="subunit">
    <text evidence="2">Homodimer.</text>
</comment>
<comment type="similarity">
    <text evidence="1">Belongs to the mandelate racemase/muconate lactonizing enzyme family. MenC type 2 subfamily.</text>
</comment>
<dbReference type="EC" id="4.2.1.113" evidence="1 2"/>
<dbReference type="EC" id="5.1.1.-" evidence="2"/>
<dbReference type="EMBL" id="AL596173">
    <property type="protein sequence ID" value="CAC97890.1"/>
    <property type="molecule type" value="Genomic_DNA"/>
</dbReference>
<dbReference type="PIR" id="AB1765">
    <property type="entry name" value="AB1765"/>
</dbReference>
<dbReference type="RefSeq" id="WP_010991324.1">
    <property type="nucleotide sequence ID" value="NC_003212.1"/>
</dbReference>
<dbReference type="PDB" id="1WUF">
    <property type="method" value="X-ray"/>
    <property type="resolution" value="2.90 A"/>
    <property type="chains" value="A/B=1-374"/>
</dbReference>
<dbReference type="PDBsum" id="1WUF"/>
<dbReference type="SMR" id="Q927X3"/>
<dbReference type="STRING" id="272626.gene:17567044"/>
<dbReference type="GeneID" id="93235927"/>
<dbReference type="KEGG" id="lin:lin2664"/>
<dbReference type="eggNOG" id="COG4948">
    <property type="taxonomic scope" value="Bacteria"/>
</dbReference>
<dbReference type="HOGENOM" id="CLU_030273_4_4_9"/>
<dbReference type="OrthoDB" id="9774531at2"/>
<dbReference type="UniPathway" id="UPA00079"/>
<dbReference type="UniPathway" id="UPA01057">
    <property type="reaction ID" value="UER00165"/>
</dbReference>
<dbReference type="EvolutionaryTrace" id="Q927X3"/>
<dbReference type="Proteomes" id="UP000002513">
    <property type="component" value="Chromosome"/>
</dbReference>
<dbReference type="GO" id="GO:0016853">
    <property type="term" value="F:isomerase activity"/>
    <property type="evidence" value="ECO:0007669"/>
    <property type="project" value="UniProtKB-KW"/>
</dbReference>
<dbReference type="GO" id="GO:0000287">
    <property type="term" value="F:magnesium ion binding"/>
    <property type="evidence" value="ECO:0007669"/>
    <property type="project" value="UniProtKB-UniRule"/>
</dbReference>
<dbReference type="GO" id="GO:0043748">
    <property type="term" value="F:O-succinylbenzoate synthase activity"/>
    <property type="evidence" value="ECO:0007669"/>
    <property type="project" value="UniProtKB-EC"/>
</dbReference>
<dbReference type="GO" id="GO:0009234">
    <property type="term" value="P:menaquinone biosynthetic process"/>
    <property type="evidence" value="ECO:0007669"/>
    <property type="project" value="UniProtKB-UniRule"/>
</dbReference>
<dbReference type="CDD" id="cd03317">
    <property type="entry name" value="NAAAR"/>
    <property type="match status" value="1"/>
</dbReference>
<dbReference type="Gene3D" id="3.20.20.120">
    <property type="entry name" value="Enolase-like C-terminal domain"/>
    <property type="match status" value="1"/>
</dbReference>
<dbReference type="Gene3D" id="3.30.390.10">
    <property type="entry name" value="Enolase-like, N-terminal domain"/>
    <property type="match status" value="1"/>
</dbReference>
<dbReference type="HAMAP" id="MF_01933">
    <property type="entry name" value="MenC_2"/>
    <property type="match status" value="1"/>
</dbReference>
<dbReference type="InterPro" id="IPR036849">
    <property type="entry name" value="Enolase-like_C_sf"/>
</dbReference>
<dbReference type="InterPro" id="IPR029017">
    <property type="entry name" value="Enolase-like_N"/>
</dbReference>
<dbReference type="InterPro" id="IPR029065">
    <property type="entry name" value="Enolase_C-like"/>
</dbReference>
<dbReference type="InterPro" id="IPR013342">
    <property type="entry name" value="Mandelate_racemase_C"/>
</dbReference>
<dbReference type="InterPro" id="IPR013341">
    <property type="entry name" value="Mandelate_racemase_N_dom"/>
</dbReference>
<dbReference type="InterPro" id="IPR047585">
    <property type="entry name" value="MenC"/>
</dbReference>
<dbReference type="InterPro" id="IPR010197">
    <property type="entry name" value="OSBS/NAAAR"/>
</dbReference>
<dbReference type="NCBIfam" id="TIGR01928">
    <property type="entry name" value="menC_lowGC_arch"/>
    <property type="match status" value="1"/>
</dbReference>
<dbReference type="PANTHER" id="PTHR48073:SF5">
    <property type="entry name" value="O-SUCCINYLBENZOATE SYNTHASE"/>
    <property type="match status" value="1"/>
</dbReference>
<dbReference type="PANTHER" id="PTHR48073">
    <property type="entry name" value="O-SUCCINYLBENZOATE SYNTHASE-RELATED"/>
    <property type="match status" value="1"/>
</dbReference>
<dbReference type="Pfam" id="PF13378">
    <property type="entry name" value="MR_MLE_C"/>
    <property type="match status" value="1"/>
</dbReference>
<dbReference type="Pfam" id="PF02746">
    <property type="entry name" value="MR_MLE_N"/>
    <property type="match status" value="1"/>
</dbReference>
<dbReference type="SFLD" id="SFLDG00180">
    <property type="entry name" value="muconate_cycloisomerase"/>
    <property type="match status" value="1"/>
</dbReference>
<dbReference type="SFLD" id="SFLDF00009">
    <property type="entry name" value="o-succinylbenzoate_synthase"/>
    <property type="match status" value="1"/>
</dbReference>
<dbReference type="SMART" id="SM00922">
    <property type="entry name" value="MR_MLE"/>
    <property type="match status" value="1"/>
</dbReference>
<dbReference type="SUPFAM" id="SSF51604">
    <property type="entry name" value="Enolase C-terminal domain-like"/>
    <property type="match status" value="1"/>
</dbReference>
<dbReference type="SUPFAM" id="SSF54826">
    <property type="entry name" value="Enolase N-terminal domain-like"/>
    <property type="match status" value="1"/>
</dbReference>
<gene>
    <name evidence="1" type="primary">menC</name>
    <name evidence="4" type="ordered locus">lin2664</name>
</gene>
<evidence type="ECO:0000255" key="1">
    <source>
        <dbReference type="HAMAP-Rule" id="MF_01933"/>
    </source>
</evidence>
<evidence type="ECO:0000269" key="2">
    <source>
    </source>
</evidence>
<evidence type="ECO:0000303" key="3">
    <source>
    </source>
</evidence>
<evidence type="ECO:0000312" key="4">
    <source>
        <dbReference type="EMBL" id="CAC97890.1"/>
    </source>
</evidence>
<evidence type="ECO:0007744" key="5">
    <source>
        <dbReference type="PDB" id="1WUF"/>
    </source>
</evidence>
<evidence type="ECO:0007829" key="6">
    <source>
        <dbReference type="PDB" id="1WUF"/>
    </source>
</evidence>
<sequence>MYFQKARLIHAELPLLAPFKTSYGELKSKDFYIIELINEEGIHGYGELEAFPLPDYTEETLSSAILIIKEQLLPLLAQRKIRKPEEIQELFSWIQGNEMAKAAVELAVWDAFAKMEKRSLAKMIGATKESIKVGVSIGLQQNVETLLQLVNQYVDQGYERVKLKIAPNKDIQFVEAVRKSFPKLSLMADANSAYNREDFLLLKELDQYDLEMIEQPFGTKDFVDHAWLQKQLKTRICLDENIRSVKDVEQAHSIGSCRAINLKLARVGGMSSALKIAEYCALNEILVWCGGMLEAGVGRAHNIALAARNEFVFPGDISASNRFFAEDIVTPAFELNQGRLKVPTNEGIGVTLDLKVLKKYTKSTEEILLNKGWS</sequence>